<keyword id="KW-0903">Direct protein sequencing</keyword>
<keyword id="KW-0326">Glycosidase</keyword>
<keyword id="KW-0378">Hydrolase</keyword>
<keyword id="KW-0964">Secreted</keyword>
<keyword id="KW-0732">Signal</keyword>
<accession>Q8J0I9</accession>
<accession>P84511</accession>
<proteinExistence type="evidence at protein level"/>
<reference evidence="5" key="1">
    <citation type="submission" date="1999-07" db="EMBL/GenBank/DDBJ databases">
        <authorList>
            <person name="Montero M."/>
        </authorList>
    </citation>
    <scope>NUCLEOTIDE SEQUENCE [MRNA]</scope>
    <source>
        <strain>ATCC 48131 / CBS 354.33 / CECT 2413 / VTT D-80150</strain>
    </source>
</reference>
<reference evidence="4" key="2">
    <citation type="journal article" date="2005" name="FEBS J.">
        <title>BGN16.3, a novel acidic beta-1,6-glucanase from mycoparasitic fungus Trichoderma harzianum CECT 2413.</title>
        <authorList>
            <person name="Montero M."/>
            <person name="Sanz L."/>
            <person name="Rey M."/>
            <person name="Monte E."/>
            <person name="Llobell A."/>
        </authorList>
    </citation>
    <scope>PROTEIN SEQUENCE OF 29-42 AND 168-180</scope>
    <scope>FUNCTION</scope>
    <scope>CATALYTIC ACTIVITY</scope>
    <scope>BIOPHYSICOCHEMICAL PROPERTIES</scope>
    <scope>SUBCELLULAR LOCATION</scope>
    <scope>INDUCTION</scope>
    <source>
        <strain>ATCC 48131 / CBS 354.33 / CECT 2413 / VTT D-80150</strain>
    </source>
</reference>
<organism>
    <name type="scientific">Trichoderma harzianum</name>
    <name type="common">Hypocrea lixii</name>
    <dbReference type="NCBI Taxonomy" id="5544"/>
    <lineage>
        <taxon>Eukaryota</taxon>
        <taxon>Fungi</taxon>
        <taxon>Dikarya</taxon>
        <taxon>Ascomycota</taxon>
        <taxon>Pezizomycotina</taxon>
        <taxon>Sordariomycetes</taxon>
        <taxon>Hypocreomycetidae</taxon>
        <taxon>Hypocreales</taxon>
        <taxon>Hypocreaceae</taxon>
        <taxon>Trichoderma</taxon>
    </lineage>
</organism>
<feature type="signal peptide" evidence="3">
    <location>
        <begin position="1"/>
        <end position="28"/>
    </location>
</feature>
<feature type="chain" id="PRO_0000042853" description="Endo-1,6-beta-D-glucanase BGN16.3" evidence="3">
    <location>
        <begin position="29"/>
        <end position="490"/>
    </location>
</feature>
<feature type="active site" description="Proton donor" evidence="1">
    <location>
        <position position="243"/>
    </location>
</feature>
<feature type="active site" description="Nucleophile" evidence="1">
    <location>
        <position position="339"/>
    </location>
</feature>
<sequence length="490" mass="51890">MRYALIASMLGQAAISVAMPSEPAHSPRAAGAQAYASNQAGNYKLTSIAAPVQGNGSPGPSTWNLSIDDTSSGYKQKIVGFGAAVTDATVSAFNELSASTLSQLLDELMTGAGASFSLMRHTIGASDLSGDPAYTYDDNGGNADPGMTGFNLGDRGTAMATMLAQMKGLNSNLQIFGSPWSAPGWMKLNNAIDGNTNNNNLNDGYLTNNGAQYSAAFAQYFVKYIQAFESHGATINAITLQNEPLNSQAGYPTMYMFSYEQGDLIQNYVAPALKAAGLSTKIWAYDHNTDQPDFPEQVMGIAADDVSAVAWHCYATNLDWTVLTNFHNSYPNTDQYMTECWTPSTGAWNQAASFTMGPLQNWARGVAAWTLGTTAQDGPHLSSGGCGTCTGLVTINNGQYTFQTAYYMMAQFSKFMPVGATVLSGTGSYTYSGSGGVQSVASLNPDGTRTVVIENTFGNDIYIHLSTSSGQEWSGNVPTNSVTTWVLPAV</sequence>
<comment type="function">
    <text evidence="3">Has highest activity on the linear beta-1,6-glucan pustulan. Lower activity against yeast glucan and laminarin (beta-1,3-glucans with beta-1,6-branches). No activity on colloidal chitin, pachyman, starch, cellulose, nigeran, dextran or gentobiose.</text>
</comment>
<comment type="catalytic activity">
    <reaction evidence="3">
        <text>Random hydrolysis of (1-&gt;6)-linkages in (1-&gt;6)-beta-D-glucans.</text>
        <dbReference type="EC" id="3.2.1.75"/>
    </reaction>
</comment>
<comment type="biophysicochemical properties">
    <kinetics>
        <Vmax evidence="3">390.0 umol/min/mg enzyme</Vmax>
    </kinetics>
    <phDependence>
        <text evidence="3">Optimum pH is 5.0. At least 20% of maximum activity is retained between pH 4.0 and 7.0.</text>
    </phDependence>
    <temperatureDependence>
        <text evidence="3">Optimum temperature is 50 degrees Celsius. After 30 minutes incubation at 50 degrees Celsius in the absence of substrate 50% of activity is lost.</text>
    </temperatureDependence>
</comment>
<comment type="subcellular location">
    <subcellularLocation>
        <location evidence="3">Secreted</location>
        <location evidence="3">Extracellular space</location>
    </subcellularLocation>
</comment>
<comment type="induction">
    <text evidence="3">By fungal cell walls.</text>
</comment>
<comment type="similarity">
    <text evidence="2">Belongs to the glycosyl hydrolase 30 family.</text>
</comment>
<name>GUN16_TRIHA</name>
<dbReference type="EC" id="3.2.1.75"/>
<dbReference type="EMBL" id="AJ243823">
    <property type="protein sequence ID" value="CAC80492.1"/>
    <property type="molecule type" value="mRNA"/>
</dbReference>
<dbReference type="SMR" id="Q8J0I9"/>
<dbReference type="CAZy" id="GH30">
    <property type="family name" value="Glycoside Hydrolase Family 30"/>
</dbReference>
<dbReference type="SABIO-RK" id="Q8J0I9"/>
<dbReference type="GO" id="GO:0005576">
    <property type="term" value="C:extracellular region"/>
    <property type="evidence" value="ECO:0000314"/>
    <property type="project" value="UniProtKB"/>
</dbReference>
<dbReference type="GO" id="GO:0016020">
    <property type="term" value="C:membrane"/>
    <property type="evidence" value="ECO:0007669"/>
    <property type="project" value="GOC"/>
</dbReference>
<dbReference type="GO" id="GO:0046557">
    <property type="term" value="F:glucan endo-1,6-beta-glucosidase activity"/>
    <property type="evidence" value="ECO:0007669"/>
    <property type="project" value="UniProtKB-EC"/>
</dbReference>
<dbReference type="GO" id="GO:0004348">
    <property type="term" value="F:glucosylceramidase activity"/>
    <property type="evidence" value="ECO:0007669"/>
    <property type="project" value="InterPro"/>
</dbReference>
<dbReference type="GO" id="GO:0016798">
    <property type="term" value="F:hydrolase activity, acting on glycosyl bonds"/>
    <property type="evidence" value="ECO:0000314"/>
    <property type="project" value="UniProtKB"/>
</dbReference>
<dbReference type="GO" id="GO:0006680">
    <property type="term" value="P:glucosylceramide catabolic process"/>
    <property type="evidence" value="ECO:0007669"/>
    <property type="project" value="TreeGrafter"/>
</dbReference>
<dbReference type="GO" id="GO:0005976">
    <property type="term" value="P:polysaccharide metabolic process"/>
    <property type="evidence" value="ECO:0000314"/>
    <property type="project" value="UniProtKB"/>
</dbReference>
<dbReference type="FunFam" id="3.20.20.80:FF:000128">
    <property type="entry name" value="Endo-1,6-beta-D-glucanase neg1"/>
    <property type="match status" value="1"/>
</dbReference>
<dbReference type="Gene3D" id="3.20.20.80">
    <property type="entry name" value="Glycosidases"/>
    <property type="match status" value="1"/>
</dbReference>
<dbReference type="Gene3D" id="2.60.40.1180">
    <property type="entry name" value="Golgi alpha-mannosidase II"/>
    <property type="match status" value="1"/>
</dbReference>
<dbReference type="InterPro" id="IPR033452">
    <property type="entry name" value="GH30_C"/>
</dbReference>
<dbReference type="InterPro" id="IPR001139">
    <property type="entry name" value="Glyco_hydro_30"/>
</dbReference>
<dbReference type="InterPro" id="IPR033453">
    <property type="entry name" value="Glyco_hydro_30_TIM-barrel"/>
</dbReference>
<dbReference type="InterPro" id="IPR013780">
    <property type="entry name" value="Glyco_hydro_b"/>
</dbReference>
<dbReference type="InterPro" id="IPR017853">
    <property type="entry name" value="Glycoside_hydrolase_SF"/>
</dbReference>
<dbReference type="PANTHER" id="PTHR11069">
    <property type="entry name" value="GLUCOSYLCERAMIDASE"/>
    <property type="match status" value="1"/>
</dbReference>
<dbReference type="PANTHER" id="PTHR11069:SF23">
    <property type="entry name" value="LYSOSOMAL ACID GLUCOSYLCERAMIDASE"/>
    <property type="match status" value="1"/>
</dbReference>
<dbReference type="Pfam" id="PF02055">
    <property type="entry name" value="Glyco_hydro_30"/>
    <property type="match status" value="1"/>
</dbReference>
<dbReference type="Pfam" id="PF17189">
    <property type="entry name" value="Glyco_hydro_30C"/>
    <property type="match status" value="1"/>
</dbReference>
<dbReference type="SUPFAM" id="SSF51445">
    <property type="entry name" value="(Trans)glycosidases"/>
    <property type="match status" value="1"/>
</dbReference>
<protein>
    <recommendedName>
        <fullName>Endo-1,6-beta-D-glucanase BGN16.3</fullName>
        <ecNumber>3.2.1.75</ecNumber>
    </recommendedName>
    <alternativeName>
        <fullName>Beta-1,6-glucanase BGN16.3</fullName>
    </alternativeName>
    <alternativeName>
        <fullName>Glucan endo-1,6-beta-glucosidase BGN16.3</fullName>
    </alternativeName>
</protein>
<evidence type="ECO:0000250" key="1">
    <source>
        <dbReference type="UniProtKB" id="P04062"/>
    </source>
</evidence>
<evidence type="ECO:0000255" key="2"/>
<evidence type="ECO:0000269" key="3">
    <source>
    </source>
</evidence>
<evidence type="ECO:0000305" key="4"/>
<evidence type="ECO:0000312" key="5">
    <source>
        <dbReference type="EMBL" id="CAC80492.1"/>
    </source>
</evidence>